<comment type="function">
    <text evidence="1">Catalyzes the transfer of endogenously produced octanoic acid from octanoyl-acyl-carrier-protein onto the lipoyl domains of lipoate-dependent enzymes. Lipoyl-ACP can also act as a substrate although octanoyl-ACP is likely to be the physiological substrate.</text>
</comment>
<comment type="catalytic activity">
    <reaction evidence="1">
        <text>octanoyl-[ACP] + L-lysyl-[protein] = N(6)-octanoyl-L-lysyl-[protein] + holo-[ACP] + H(+)</text>
        <dbReference type="Rhea" id="RHEA:17665"/>
        <dbReference type="Rhea" id="RHEA-COMP:9636"/>
        <dbReference type="Rhea" id="RHEA-COMP:9685"/>
        <dbReference type="Rhea" id="RHEA-COMP:9752"/>
        <dbReference type="Rhea" id="RHEA-COMP:9928"/>
        <dbReference type="ChEBI" id="CHEBI:15378"/>
        <dbReference type="ChEBI" id="CHEBI:29969"/>
        <dbReference type="ChEBI" id="CHEBI:64479"/>
        <dbReference type="ChEBI" id="CHEBI:78463"/>
        <dbReference type="ChEBI" id="CHEBI:78809"/>
        <dbReference type="EC" id="2.3.1.181"/>
    </reaction>
</comment>
<comment type="pathway">
    <text evidence="1">Protein modification; protein lipoylation via endogenous pathway; protein N(6)-(lipoyl)lysine from octanoyl-[acyl-carrier-protein]: step 1/2.</text>
</comment>
<comment type="subcellular location">
    <subcellularLocation>
        <location evidence="1">Cytoplasm</location>
    </subcellularLocation>
</comment>
<comment type="miscellaneous">
    <text evidence="1">In the reaction, the free carboxyl group of octanoic acid is attached via an amide linkage to the epsilon-amino group of a specific lysine residue of lipoyl domains of lipoate-dependent enzymes.</text>
</comment>
<comment type="similarity">
    <text evidence="1">Belongs to the LipB family.</text>
</comment>
<feature type="chain" id="PRO_0000062893" description="Octanoyltransferase">
    <location>
        <begin position="1"/>
        <end position="218"/>
    </location>
</feature>
<feature type="domain" description="BPL/LPL catalytic" evidence="2">
    <location>
        <begin position="31"/>
        <end position="206"/>
    </location>
</feature>
<feature type="active site" description="Acyl-thioester intermediate" evidence="1">
    <location>
        <position position="168"/>
    </location>
</feature>
<feature type="binding site" evidence="1">
    <location>
        <begin position="70"/>
        <end position="77"/>
    </location>
    <ligand>
        <name>substrate</name>
    </ligand>
</feature>
<feature type="binding site" evidence="1">
    <location>
        <begin position="137"/>
        <end position="139"/>
    </location>
    <ligand>
        <name>substrate</name>
    </ligand>
</feature>
<feature type="binding site" evidence="1">
    <location>
        <begin position="150"/>
        <end position="152"/>
    </location>
    <ligand>
        <name>substrate</name>
    </ligand>
</feature>
<feature type="site" description="Lowers pKa of active site Cys" evidence="1">
    <location>
        <position position="134"/>
    </location>
</feature>
<reference key="1">
    <citation type="journal article" date="2003" name="Genome Res.">
        <title>Comparative genome analysis of Vibrio vulnificus, a marine pathogen.</title>
        <authorList>
            <person name="Chen C.-Y."/>
            <person name="Wu K.-M."/>
            <person name="Chang Y.-C."/>
            <person name="Chang C.-H."/>
            <person name="Tsai H.-C."/>
            <person name="Liao T.-L."/>
            <person name="Liu Y.-M."/>
            <person name="Chen H.-J."/>
            <person name="Shen A.B.-T."/>
            <person name="Li J.-C."/>
            <person name="Su T.-L."/>
            <person name="Shao C.-P."/>
            <person name="Lee C.-T."/>
            <person name="Hor L.-I."/>
            <person name="Tsai S.-F."/>
        </authorList>
    </citation>
    <scope>NUCLEOTIDE SEQUENCE [LARGE SCALE GENOMIC DNA]</scope>
    <source>
        <strain>YJ016</strain>
    </source>
</reference>
<evidence type="ECO:0000255" key="1">
    <source>
        <dbReference type="HAMAP-Rule" id="MF_00013"/>
    </source>
</evidence>
<evidence type="ECO:0000255" key="2">
    <source>
        <dbReference type="PROSITE-ProRule" id="PRU01067"/>
    </source>
</evidence>
<protein>
    <recommendedName>
        <fullName evidence="1">Octanoyltransferase</fullName>
        <ecNumber evidence="1">2.3.1.181</ecNumber>
    </recommendedName>
    <alternativeName>
        <fullName evidence="1">Lipoate-protein ligase B</fullName>
    </alternativeName>
    <alternativeName>
        <fullName evidence="1">Lipoyl/octanoyl transferase</fullName>
    </alternativeName>
    <alternativeName>
        <fullName evidence="1">Octanoyl-[acyl-carrier-protein]-protein N-octanoyltransferase</fullName>
    </alternativeName>
</protein>
<gene>
    <name evidence="1" type="primary">lipB</name>
    <name type="ordered locus">VV0901</name>
</gene>
<organism>
    <name type="scientific">Vibrio vulnificus (strain YJ016)</name>
    <dbReference type="NCBI Taxonomy" id="196600"/>
    <lineage>
        <taxon>Bacteria</taxon>
        <taxon>Pseudomonadati</taxon>
        <taxon>Pseudomonadota</taxon>
        <taxon>Gammaproteobacteria</taxon>
        <taxon>Vibrionales</taxon>
        <taxon>Vibrionaceae</taxon>
        <taxon>Vibrio</taxon>
    </lineage>
</organism>
<accession>Q7MN16</accession>
<keyword id="KW-0012">Acyltransferase</keyword>
<keyword id="KW-0963">Cytoplasm</keyword>
<keyword id="KW-0808">Transferase</keyword>
<proteinExistence type="inferred from homology"/>
<dbReference type="EC" id="2.3.1.181" evidence="1"/>
<dbReference type="EMBL" id="BA000037">
    <property type="protein sequence ID" value="BAC93665.1"/>
    <property type="molecule type" value="Genomic_DNA"/>
</dbReference>
<dbReference type="RefSeq" id="WP_011149704.1">
    <property type="nucleotide sequence ID" value="NC_005139.1"/>
</dbReference>
<dbReference type="SMR" id="Q7MN16"/>
<dbReference type="STRING" id="672.VV93_v1c08380"/>
<dbReference type="KEGG" id="vvy:VV0901"/>
<dbReference type="eggNOG" id="COG0321">
    <property type="taxonomic scope" value="Bacteria"/>
</dbReference>
<dbReference type="HOGENOM" id="CLU_035168_3_1_6"/>
<dbReference type="UniPathway" id="UPA00538">
    <property type="reaction ID" value="UER00592"/>
</dbReference>
<dbReference type="Proteomes" id="UP000002675">
    <property type="component" value="Chromosome I"/>
</dbReference>
<dbReference type="GO" id="GO:0005737">
    <property type="term" value="C:cytoplasm"/>
    <property type="evidence" value="ECO:0007669"/>
    <property type="project" value="UniProtKB-SubCell"/>
</dbReference>
<dbReference type="GO" id="GO:0033819">
    <property type="term" value="F:lipoyl(octanoyl) transferase activity"/>
    <property type="evidence" value="ECO:0007669"/>
    <property type="project" value="UniProtKB-EC"/>
</dbReference>
<dbReference type="GO" id="GO:0036211">
    <property type="term" value="P:protein modification process"/>
    <property type="evidence" value="ECO:0007669"/>
    <property type="project" value="InterPro"/>
</dbReference>
<dbReference type="CDD" id="cd16444">
    <property type="entry name" value="LipB"/>
    <property type="match status" value="1"/>
</dbReference>
<dbReference type="FunFam" id="3.30.930.10:FF:000020">
    <property type="entry name" value="Octanoyltransferase"/>
    <property type="match status" value="1"/>
</dbReference>
<dbReference type="Gene3D" id="3.30.930.10">
    <property type="entry name" value="Bira Bifunctional Protein, Domain 2"/>
    <property type="match status" value="1"/>
</dbReference>
<dbReference type="HAMAP" id="MF_00013">
    <property type="entry name" value="LipB"/>
    <property type="match status" value="1"/>
</dbReference>
<dbReference type="InterPro" id="IPR045864">
    <property type="entry name" value="aa-tRNA-synth_II/BPL/LPL"/>
</dbReference>
<dbReference type="InterPro" id="IPR004143">
    <property type="entry name" value="BPL_LPL_catalytic"/>
</dbReference>
<dbReference type="InterPro" id="IPR000544">
    <property type="entry name" value="Octanoyltransferase"/>
</dbReference>
<dbReference type="InterPro" id="IPR020605">
    <property type="entry name" value="Octanoyltransferase_CS"/>
</dbReference>
<dbReference type="NCBIfam" id="TIGR00214">
    <property type="entry name" value="lipB"/>
    <property type="match status" value="1"/>
</dbReference>
<dbReference type="NCBIfam" id="NF010922">
    <property type="entry name" value="PRK14342.1"/>
    <property type="match status" value="1"/>
</dbReference>
<dbReference type="PANTHER" id="PTHR10993:SF7">
    <property type="entry name" value="LIPOYLTRANSFERASE 2, MITOCHONDRIAL-RELATED"/>
    <property type="match status" value="1"/>
</dbReference>
<dbReference type="PANTHER" id="PTHR10993">
    <property type="entry name" value="OCTANOYLTRANSFERASE"/>
    <property type="match status" value="1"/>
</dbReference>
<dbReference type="Pfam" id="PF21948">
    <property type="entry name" value="LplA-B_cat"/>
    <property type="match status" value="1"/>
</dbReference>
<dbReference type="PIRSF" id="PIRSF016262">
    <property type="entry name" value="LPLase"/>
    <property type="match status" value="1"/>
</dbReference>
<dbReference type="SUPFAM" id="SSF55681">
    <property type="entry name" value="Class II aaRS and biotin synthetases"/>
    <property type="match status" value="1"/>
</dbReference>
<dbReference type="PROSITE" id="PS51733">
    <property type="entry name" value="BPL_LPL_CATALYTIC"/>
    <property type="match status" value="1"/>
</dbReference>
<dbReference type="PROSITE" id="PS01313">
    <property type="entry name" value="LIPB"/>
    <property type="match status" value="1"/>
</dbReference>
<name>LIPB_VIBVY</name>
<sequence>MQNQLVVKRLGRRDYLPVWQAMHEFTDTRNEETPDEVWLVEHNPVFTQGQAGKAEHLLNTGDIPVVQSDRGGQVTYHGPGQLVAYFLINLRRKKLGVRDLVTTIENLVINTLKAYNIDSAARPDAPGVYVEGRKICSLGLRIRKGCSFHGLALNVNMDLSPFLRINPCGYQGMEMVQVSELGGPTDIALVEQQLVKELVNLLGYEQVEFSTEAEVREA</sequence>